<sequence length="92" mass="10495">MESNFIDWHPADIIAGLRKKGTSMAAESRRNGLSSSTLANALSRPWPKGEMIIAKALGTDPWVIWPSRYHDPQTHEFIDRTQLMRSYTKPKK</sequence>
<evidence type="ECO:0000250" key="1"/>
<evidence type="ECO:0000305" key="2"/>
<protein>
    <recommendedName>
        <fullName>Sugar fermentation stimulation protein B</fullName>
    </recommendedName>
    <alternativeName>
        <fullName>Ner-like protein</fullName>
    </alternativeName>
</protein>
<comment type="function">
    <text evidence="1">This protein is involved in positive regulation of the metabolism of sugars.</text>
</comment>
<comment type="similarity">
    <text evidence="2">Belongs to the ner transcriptional regulatory family.</text>
</comment>
<proteinExistence type="inferred from homology"/>
<keyword id="KW-0010">Activator</keyword>
<keyword id="KW-0238">DNA-binding</keyword>
<keyword id="KW-1185">Reference proteome</keyword>
<keyword id="KW-0804">Transcription</keyword>
<keyword id="KW-0805">Transcription regulation</keyword>
<feature type="chain" id="PRO_0000062781" description="Sugar fermentation stimulation protein B">
    <location>
        <begin position="1"/>
        <end position="92"/>
    </location>
</feature>
<feature type="DNA-binding region" description="H-T-H motif" evidence="1">
    <location>
        <begin position="50"/>
        <end position="69"/>
    </location>
</feature>
<reference key="1">
    <citation type="journal article" date="2002" name="Proc. Natl. Acad. Sci. U.S.A.">
        <title>Extensive mosaic structure revealed by the complete genome sequence of uropathogenic Escherichia coli.</title>
        <authorList>
            <person name="Welch R.A."/>
            <person name="Burland V."/>
            <person name="Plunkett G. III"/>
            <person name="Redford P."/>
            <person name="Roesch P."/>
            <person name="Rasko D."/>
            <person name="Buckles E.L."/>
            <person name="Liou S.-R."/>
            <person name="Boutin A."/>
            <person name="Hackett J."/>
            <person name="Stroud D."/>
            <person name="Mayhew G.F."/>
            <person name="Rose D.J."/>
            <person name="Zhou S."/>
            <person name="Schwartz D.C."/>
            <person name="Perna N.T."/>
            <person name="Mobley H.L.T."/>
            <person name="Donnenberg M.S."/>
            <person name="Blattner F.R."/>
        </authorList>
    </citation>
    <scope>NUCLEOTIDE SEQUENCE [LARGE SCALE GENOMIC DNA]</scope>
    <source>
        <strain>CFT073 / ATCC 700928 / UPEC</strain>
    </source>
</reference>
<dbReference type="EMBL" id="AE014075">
    <property type="protein sequence ID" value="AAN82386.1"/>
    <property type="molecule type" value="Genomic_DNA"/>
</dbReference>
<dbReference type="RefSeq" id="WP_000445413.1">
    <property type="nucleotide sequence ID" value="NZ_CP051263.1"/>
</dbReference>
<dbReference type="SMR" id="P0ACH2"/>
<dbReference type="STRING" id="199310.c3946"/>
<dbReference type="GeneID" id="93778793"/>
<dbReference type="KEGG" id="ecc:c3946"/>
<dbReference type="eggNOG" id="COG3423">
    <property type="taxonomic scope" value="Bacteria"/>
</dbReference>
<dbReference type="HOGENOM" id="CLU_162005_0_1_6"/>
<dbReference type="BioCyc" id="ECOL199310:C3946-MONOMER"/>
<dbReference type="Proteomes" id="UP000001410">
    <property type="component" value="Chromosome"/>
</dbReference>
<dbReference type="GO" id="GO:0003677">
    <property type="term" value="F:DNA binding"/>
    <property type="evidence" value="ECO:0007669"/>
    <property type="project" value="UniProtKB-KW"/>
</dbReference>
<dbReference type="FunFam" id="1.10.260.40:FF:000017">
    <property type="entry name" value="DNA-binding transcriptional regulator SfsB"/>
    <property type="match status" value="1"/>
</dbReference>
<dbReference type="Gene3D" id="1.10.260.40">
    <property type="entry name" value="lambda repressor-like DNA-binding domains"/>
    <property type="match status" value="1"/>
</dbReference>
<dbReference type="InterPro" id="IPR010982">
    <property type="entry name" value="Lambda_DNA-bd_dom_sf"/>
</dbReference>
<dbReference type="InterPro" id="IPR038722">
    <property type="entry name" value="Ner_HTH_dom"/>
</dbReference>
<dbReference type="NCBIfam" id="NF007670">
    <property type="entry name" value="PRK10344.1"/>
    <property type="match status" value="1"/>
</dbReference>
<dbReference type="Pfam" id="PF13693">
    <property type="entry name" value="HTH_35"/>
    <property type="match status" value="1"/>
</dbReference>
<dbReference type="SUPFAM" id="SSF47413">
    <property type="entry name" value="lambda repressor-like DNA-binding domains"/>
    <property type="match status" value="1"/>
</dbReference>
<accession>P0ACH2</accession>
<accession>P18837</accession>
<gene>
    <name type="primary">sfsB</name>
    <name type="ordered locus">c3946</name>
</gene>
<organism>
    <name type="scientific">Escherichia coli O6:H1 (strain CFT073 / ATCC 700928 / UPEC)</name>
    <dbReference type="NCBI Taxonomy" id="199310"/>
    <lineage>
        <taxon>Bacteria</taxon>
        <taxon>Pseudomonadati</taxon>
        <taxon>Pseudomonadota</taxon>
        <taxon>Gammaproteobacteria</taxon>
        <taxon>Enterobacterales</taxon>
        <taxon>Enterobacteriaceae</taxon>
        <taxon>Escherichia</taxon>
    </lineage>
</organism>
<name>SFSB_ECOL6</name>